<feature type="chain" id="PRO_0000378053" description="B3 domain-containing protein Os03g0164300">
    <location>
        <begin position="1"/>
        <end position="91"/>
    </location>
</feature>
<feature type="DNA-binding region" description="TF-B3" evidence="1">
    <location>
        <begin position="1"/>
        <end position="91"/>
    </location>
</feature>
<name>Y3643_ORYSJ</name>
<accession>B7EIH2</accession>
<accession>Q0DUW2</accession>
<accession>Q8S5U1</accession>
<sequence>MTNAKMTFAVQFSERYINKYIGSPIDDLMVSMAGTTQSYQMRLKRSKDSRAMLTTGWNQLIDAKAFDEGDVCLFHFKEVDDVLVLKVHVLK</sequence>
<gene>
    <name type="ordered locus">Os03g0164300</name>
    <name type="ordered locus">LOC_Os03g06850</name>
    <name type="ORF">OJ1123F12.9</name>
    <name type="ORF">OsJ_09529</name>
</gene>
<keyword id="KW-0238">DNA-binding</keyword>
<keyword id="KW-0539">Nucleus</keyword>
<keyword id="KW-1185">Reference proteome</keyword>
<keyword id="KW-0804">Transcription</keyword>
<keyword id="KW-0805">Transcription regulation</keyword>
<comment type="subcellular location">
    <subcellularLocation>
        <location evidence="1">Nucleus</location>
    </subcellularLocation>
</comment>
<comment type="sequence caution" evidence="2">
    <conflict type="erroneous gene model prediction">
        <sequence resource="EMBL-CDS" id="AAM15786"/>
    </conflict>
</comment>
<comment type="sequence caution" evidence="2">
    <conflict type="erroneous gene model prediction">
        <sequence resource="EMBL-CDS" id="ABF94140"/>
    </conflict>
</comment>
<comment type="sequence caution" evidence="2">
    <conflict type="erroneous initiation">
        <sequence resource="EMBL-CDS" id="BAF10976"/>
    </conflict>
</comment>
<protein>
    <recommendedName>
        <fullName>B3 domain-containing protein Os03g0164300</fullName>
    </recommendedName>
</protein>
<organism>
    <name type="scientific">Oryza sativa subsp. japonica</name>
    <name type="common">Rice</name>
    <dbReference type="NCBI Taxonomy" id="39947"/>
    <lineage>
        <taxon>Eukaryota</taxon>
        <taxon>Viridiplantae</taxon>
        <taxon>Streptophyta</taxon>
        <taxon>Embryophyta</taxon>
        <taxon>Tracheophyta</taxon>
        <taxon>Spermatophyta</taxon>
        <taxon>Magnoliopsida</taxon>
        <taxon>Liliopsida</taxon>
        <taxon>Poales</taxon>
        <taxon>Poaceae</taxon>
        <taxon>BOP clade</taxon>
        <taxon>Oryzoideae</taxon>
        <taxon>Oryzeae</taxon>
        <taxon>Oryzinae</taxon>
        <taxon>Oryza</taxon>
        <taxon>Oryza sativa</taxon>
    </lineage>
</organism>
<dbReference type="EMBL" id="AC104428">
    <property type="protein sequence ID" value="AAM15786.1"/>
    <property type="status" value="ALT_SEQ"/>
    <property type="molecule type" value="Genomic_DNA"/>
</dbReference>
<dbReference type="EMBL" id="DP000009">
    <property type="protein sequence ID" value="ABF94140.1"/>
    <property type="status" value="ALT_SEQ"/>
    <property type="molecule type" value="Genomic_DNA"/>
</dbReference>
<dbReference type="EMBL" id="AP008209">
    <property type="protein sequence ID" value="BAF10976.1"/>
    <property type="status" value="ALT_INIT"/>
    <property type="molecule type" value="Genomic_DNA"/>
</dbReference>
<dbReference type="EMBL" id="AP014959">
    <property type="status" value="NOT_ANNOTATED_CDS"/>
    <property type="molecule type" value="Genomic_DNA"/>
</dbReference>
<dbReference type="EMBL" id="CM000140">
    <property type="protein sequence ID" value="EEE58377.1"/>
    <property type="molecule type" value="Genomic_DNA"/>
</dbReference>
<dbReference type="EMBL" id="AK070845">
    <property type="protein sequence ID" value="BAG92169.1"/>
    <property type="molecule type" value="mRNA"/>
</dbReference>
<dbReference type="SMR" id="B7EIH2"/>
<dbReference type="FunCoup" id="B7EIH2">
    <property type="interactions" value="189"/>
</dbReference>
<dbReference type="STRING" id="39947.B7EIH2"/>
<dbReference type="PaxDb" id="39947-B7EIH2"/>
<dbReference type="KEGG" id="dosa:Os03g0164300"/>
<dbReference type="InParanoid" id="B7EIH2"/>
<dbReference type="Proteomes" id="UP000000763">
    <property type="component" value="Chromosome 3"/>
</dbReference>
<dbReference type="Proteomes" id="UP000007752">
    <property type="component" value="Chromosome 3"/>
</dbReference>
<dbReference type="Proteomes" id="UP000059680">
    <property type="component" value="Chromosome 3"/>
</dbReference>
<dbReference type="GO" id="GO:0005634">
    <property type="term" value="C:nucleus"/>
    <property type="evidence" value="ECO:0007669"/>
    <property type="project" value="UniProtKB-SubCell"/>
</dbReference>
<dbReference type="GO" id="GO:0003677">
    <property type="term" value="F:DNA binding"/>
    <property type="evidence" value="ECO:0007669"/>
    <property type="project" value="UniProtKB-KW"/>
</dbReference>
<dbReference type="CDD" id="cd10017">
    <property type="entry name" value="B3_DNA"/>
    <property type="match status" value="1"/>
</dbReference>
<dbReference type="Gene3D" id="2.40.330.10">
    <property type="entry name" value="DNA-binding pseudobarrel domain"/>
    <property type="match status" value="1"/>
</dbReference>
<dbReference type="InterPro" id="IPR003340">
    <property type="entry name" value="B3_DNA-bd"/>
</dbReference>
<dbReference type="InterPro" id="IPR015300">
    <property type="entry name" value="DNA-bd_pseudobarrel_sf"/>
</dbReference>
<dbReference type="Pfam" id="PF02362">
    <property type="entry name" value="B3"/>
    <property type="match status" value="1"/>
</dbReference>
<dbReference type="SUPFAM" id="SSF101936">
    <property type="entry name" value="DNA-binding pseudobarrel domain"/>
    <property type="match status" value="1"/>
</dbReference>
<dbReference type="PROSITE" id="PS50863">
    <property type="entry name" value="B3"/>
    <property type="match status" value="1"/>
</dbReference>
<proteinExistence type="inferred from homology"/>
<reference key="1">
    <citation type="journal article" date="2005" name="Genome Res.">
        <title>Sequence, annotation, and analysis of synteny between rice chromosome 3 and diverged grass species.</title>
        <authorList>
            <consortium name="The rice chromosome 3 sequencing consortium"/>
            <person name="Buell C.R."/>
            <person name="Yuan Q."/>
            <person name="Ouyang S."/>
            <person name="Liu J."/>
            <person name="Zhu W."/>
            <person name="Wang A."/>
            <person name="Maiti R."/>
            <person name="Haas B."/>
            <person name="Wortman J."/>
            <person name="Pertea M."/>
            <person name="Jones K.M."/>
            <person name="Kim M."/>
            <person name="Overton L."/>
            <person name="Tsitrin T."/>
            <person name="Fadrosh D."/>
            <person name="Bera J."/>
            <person name="Weaver B."/>
            <person name="Jin S."/>
            <person name="Johri S."/>
            <person name="Reardon M."/>
            <person name="Webb K."/>
            <person name="Hill J."/>
            <person name="Moffat K."/>
            <person name="Tallon L."/>
            <person name="Van Aken S."/>
            <person name="Lewis M."/>
            <person name="Utterback T."/>
            <person name="Feldblyum T."/>
            <person name="Zismann V."/>
            <person name="Iobst S."/>
            <person name="Hsiao J."/>
            <person name="de Vazeille A.R."/>
            <person name="Salzberg S.L."/>
            <person name="White O."/>
            <person name="Fraser C.M."/>
            <person name="Yu Y."/>
            <person name="Kim H."/>
            <person name="Rambo T."/>
            <person name="Currie J."/>
            <person name="Collura K."/>
            <person name="Kernodle-Thompson S."/>
            <person name="Wei F."/>
            <person name="Kudrna K."/>
            <person name="Ammiraju J.S.S."/>
            <person name="Luo M."/>
            <person name="Goicoechea J.L."/>
            <person name="Wing R.A."/>
            <person name="Henry D."/>
            <person name="Oates R."/>
            <person name="Palmer M."/>
            <person name="Pries G."/>
            <person name="Saski C."/>
            <person name="Simmons J."/>
            <person name="Soderlund C."/>
            <person name="Nelson W."/>
            <person name="de la Bastide M."/>
            <person name="Spiegel L."/>
            <person name="Nascimento L."/>
            <person name="Huang E."/>
            <person name="Preston R."/>
            <person name="Zutavern T."/>
            <person name="Palmer L."/>
            <person name="O'Shaughnessy A."/>
            <person name="Dike S."/>
            <person name="McCombie W.R."/>
            <person name="Minx P."/>
            <person name="Cordum H."/>
            <person name="Wilson R."/>
            <person name="Jin W."/>
            <person name="Lee H.R."/>
            <person name="Jiang J."/>
            <person name="Jackson S."/>
        </authorList>
    </citation>
    <scope>NUCLEOTIDE SEQUENCE [LARGE SCALE GENOMIC DNA]</scope>
    <source>
        <strain>cv. Nipponbare</strain>
    </source>
</reference>
<reference key="2">
    <citation type="journal article" date="2005" name="Nature">
        <title>The map-based sequence of the rice genome.</title>
        <authorList>
            <consortium name="International rice genome sequencing project (IRGSP)"/>
        </authorList>
    </citation>
    <scope>NUCLEOTIDE SEQUENCE [LARGE SCALE GENOMIC DNA]</scope>
    <source>
        <strain>cv. Nipponbare</strain>
    </source>
</reference>
<reference key="3">
    <citation type="journal article" date="2008" name="Nucleic Acids Res.">
        <title>The rice annotation project database (RAP-DB): 2008 update.</title>
        <authorList>
            <consortium name="The rice annotation project (RAP)"/>
        </authorList>
    </citation>
    <scope>GENOME REANNOTATION</scope>
    <source>
        <strain>cv. Nipponbare</strain>
    </source>
</reference>
<reference key="4">
    <citation type="journal article" date="2013" name="Rice">
        <title>Improvement of the Oryza sativa Nipponbare reference genome using next generation sequence and optical map data.</title>
        <authorList>
            <person name="Kawahara Y."/>
            <person name="de la Bastide M."/>
            <person name="Hamilton J.P."/>
            <person name="Kanamori H."/>
            <person name="McCombie W.R."/>
            <person name="Ouyang S."/>
            <person name="Schwartz D.C."/>
            <person name="Tanaka T."/>
            <person name="Wu J."/>
            <person name="Zhou S."/>
            <person name="Childs K.L."/>
            <person name="Davidson R.M."/>
            <person name="Lin H."/>
            <person name="Quesada-Ocampo L."/>
            <person name="Vaillancourt B."/>
            <person name="Sakai H."/>
            <person name="Lee S.S."/>
            <person name="Kim J."/>
            <person name="Numa H."/>
            <person name="Itoh T."/>
            <person name="Buell C.R."/>
            <person name="Matsumoto T."/>
        </authorList>
    </citation>
    <scope>GENOME REANNOTATION</scope>
    <source>
        <strain>cv. Nipponbare</strain>
    </source>
</reference>
<reference key="5">
    <citation type="journal article" date="2005" name="PLoS Biol.">
        <title>The genomes of Oryza sativa: a history of duplications.</title>
        <authorList>
            <person name="Yu J."/>
            <person name="Wang J."/>
            <person name="Lin W."/>
            <person name="Li S."/>
            <person name="Li H."/>
            <person name="Zhou J."/>
            <person name="Ni P."/>
            <person name="Dong W."/>
            <person name="Hu S."/>
            <person name="Zeng C."/>
            <person name="Zhang J."/>
            <person name="Zhang Y."/>
            <person name="Li R."/>
            <person name="Xu Z."/>
            <person name="Li S."/>
            <person name="Li X."/>
            <person name="Zheng H."/>
            <person name="Cong L."/>
            <person name="Lin L."/>
            <person name="Yin J."/>
            <person name="Geng J."/>
            <person name="Li G."/>
            <person name="Shi J."/>
            <person name="Liu J."/>
            <person name="Lv H."/>
            <person name="Li J."/>
            <person name="Wang J."/>
            <person name="Deng Y."/>
            <person name="Ran L."/>
            <person name="Shi X."/>
            <person name="Wang X."/>
            <person name="Wu Q."/>
            <person name="Li C."/>
            <person name="Ren X."/>
            <person name="Wang J."/>
            <person name="Wang X."/>
            <person name="Li D."/>
            <person name="Liu D."/>
            <person name="Zhang X."/>
            <person name="Ji Z."/>
            <person name="Zhao W."/>
            <person name="Sun Y."/>
            <person name="Zhang Z."/>
            <person name="Bao J."/>
            <person name="Han Y."/>
            <person name="Dong L."/>
            <person name="Ji J."/>
            <person name="Chen P."/>
            <person name="Wu S."/>
            <person name="Liu J."/>
            <person name="Xiao Y."/>
            <person name="Bu D."/>
            <person name="Tan J."/>
            <person name="Yang L."/>
            <person name="Ye C."/>
            <person name="Zhang J."/>
            <person name="Xu J."/>
            <person name="Zhou Y."/>
            <person name="Yu Y."/>
            <person name="Zhang B."/>
            <person name="Zhuang S."/>
            <person name="Wei H."/>
            <person name="Liu B."/>
            <person name="Lei M."/>
            <person name="Yu H."/>
            <person name="Li Y."/>
            <person name="Xu H."/>
            <person name="Wei S."/>
            <person name="He X."/>
            <person name="Fang L."/>
            <person name="Zhang Z."/>
            <person name="Zhang Y."/>
            <person name="Huang X."/>
            <person name="Su Z."/>
            <person name="Tong W."/>
            <person name="Li J."/>
            <person name="Tong Z."/>
            <person name="Li S."/>
            <person name="Ye J."/>
            <person name="Wang L."/>
            <person name="Fang L."/>
            <person name="Lei T."/>
            <person name="Chen C.-S."/>
            <person name="Chen H.-C."/>
            <person name="Xu Z."/>
            <person name="Li H."/>
            <person name="Huang H."/>
            <person name="Zhang F."/>
            <person name="Xu H."/>
            <person name="Li N."/>
            <person name="Zhao C."/>
            <person name="Li S."/>
            <person name="Dong L."/>
            <person name="Huang Y."/>
            <person name="Li L."/>
            <person name="Xi Y."/>
            <person name="Qi Q."/>
            <person name="Li W."/>
            <person name="Zhang B."/>
            <person name="Hu W."/>
            <person name="Zhang Y."/>
            <person name="Tian X."/>
            <person name="Jiao Y."/>
            <person name="Liang X."/>
            <person name="Jin J."/>
            <person name="Gao L."/>
            <person name="Zheng W."/>
            <person name="Hao B."/>
            <person name="Liu S.-M."/>
            <person name="Wang W."/>
            <person name="Yuan L."/>
            <person name="Cao M."/>
            <person name="McDermott J."/>
            <person name="Samudrala R."/>
            <person name="Wang J."/>
            <person name="Wong G.K.-S."/>
            <person name="Yang H."/>
        </authorList>
    </citation>
    <scope>NUCLEOTIDE SEQUENCE [LARGE SCALE GENOMIC DNA]</scope>
    <source>
        <strain>cv. Nipponbare</strain>
    </source>
</reference>
<reference key="6">
    <citation type="journal article" date="2003" name="Science">
        <title>Collection, mapping, and annotation of over 28,000 cDNA clones from japonica rice.</title>
        <authorList>
            <consortium name="The rice full-length cDNA consortium"/>
        </authorList>
    </citation>
    <scope>NUCLEOTIDE SEQUENCE [LARGE SCALE MRNA]</scope>
    <source>
        <strain>cv. Nipponbare</strain>
    </source>
</reference>
<evidence type="ECO:0000255" key="1">
    <source>
        <dbReference type="PROSITE-ProRule" id="PRU00326"/>
    </source>
</evidence>
<evidence type="ECO:0000305" key="2"/>